<proteinExistence type="evidence at protein level"/>
<feature type="chain" id="PRO_0000130258" description="Small ribosomal subunit protein uS3">
    <location>
        <begin position="1"/>
        <end position="210"/>
    </location>
</feature>
<feature type="domain" description="KH type-2" evidence="1">
    <location>
        <begin position="17"/>
        <end position="86"/>
    </location>
</feature>
<dbReference type="EMBL" id="AE009950">
    <property type="protein sequence ID" value="AAL81943.1"/>
    <property type="molecule type" value="Genomic_DNA"/>
</dbReference>
<dbReference type="PDB" id="4V6U">
    <property type="method" value="EM"/>
    <property type="resolution" value="6.60 A"/>
    <property type="chains" value="AC=1-210"/>
</dbReference>
<dbReference type="PDB" id="5JB3">
    <property type="method" value="EM"/>
    <property type="resolution" value="5.34 A"/>
    <property type="chains" value="Z=1-210"/>
</dbReference>
<dbReference type="PDB" id="5JBH">
    <property type="method" value="EM"/>
    <property type="resolution" value="5.34 A"/>
    <property type="chains" value="Z=1-210"/>
</dbReference>
<dbReference type="PDBsum" id="4V6U"/>
<dbReference type="PDBsum" id="5JB3"/>
<dbReference type="PDBsum" id="5JBH"/>
<dbReference type="EMDB" id="EMD-50611"/>
<dbReference type="EMDB" id="EMD-50612"/>
<dbReference type="EMDB" id="EMD-50613"/>
<dbReference type="EMDB" id="EMD-8149"/>
<dbReference type="SMR" id="Q8U004"/>
<dbReference type="STRING" id="186497.PF1819"/>
<dbReference type="PaxDb" id="186497-PF1819"/>
<dbReference type="KEGG" id="pfu:PF1819"/>
<dbReference type="PATRIC" id="fig|186497.12.peg.1890"/>
<dbReference type="eggNOG" id="arCOG04097">
    <property type="taxonomic scope" value="Archaea"/>
</dbReference>
<dbReference type="HOGENOM" id="CLU_058591_1_1_2"/>
<dbReference type="OrthoDB" id="9126at2157"/>
<dbReference type="PhylomeDB" id="Q8U004"/>
<dbReference type="Proteomes" id="UP000001013">
    <property type="component" value="Chromosome"/>
</dbReference>
<dbReference type="GO" id="GO:0022627">
    <property type="term" value="C:cytosolic small ribosomal subunit"/>
    <property type="evidence" value="ECO:0007669"/>
    <property type="project" value="TreeGrafter"/>
</dbReference>
<dbReference type="GO" id="GO:0019843">
    <property type="term" value="F:rRNA binding"/>
    <property type="evidence" value="ECO:0007669"/>
    <property type="project" value="UniProtKB-UniRule"/>
</dbReference>
<dbReference type="GO" id="GO:0003735">
    <property type="term" value="F:structural constituent of ribosome"/>
    <property type="evidence" value="ECO:0007669"/>
    <property type="project" value="InterPro"/>
</dbReference>
<dbReference type="GO" id="GO:0006412">
    <property type="term" value="P:translation"/>
    <property type="evidence" value="ECO:0007669"/>
    <property type="project" value="UniProtKB-UniRule"/>
</dbReference>
<dbReference type="CDD" id="cd02411">
    <property type="entry name" value="KH-II_30S_S3_arch"/>
    <property type="match status" value="1"/>
</dbReference>
<dbReference type="FunFam" id="3.30.1140.32:FF:000012">
    <property type="entry name" value="30S ribosomal protein S3"/>
    <property type="match status" value="1"/>
</dbReference>
<dbReference type="FunFam" id="3.30.300.20:FF:000001">
    <property type="entry name" value="30S ribosomal protein S3"/>
    <property type="match status" value="1"/>
</dbReference>
<dbReference type="Gene3D" id="3.30.300.20">
    <property type="match status" value="1"/>
</dbReference>
<dbReference type="Gene3D" id="3.30.1140.32">
    <property type="entry name" value="Ribosomal protein S3, C-terminal domain"/>
    <property type="match status" value="1"/>
</dbReference>
<dbReference type="HAMAP" id="MF_01309_A">
    <property type="entry name" value="Ribosomal_uS3_A"/>
    <property type="match status" value="1"/>
</dbReference>
<dbReference type="InterPro" id="IPR004087">
    <property type="entry name" value="KH_dom"/>
</dbReference>
<dbReference type="InterPro" id="IPR015946">
    <property type="entry name" value="KH_dom-like_a/b"/>
</dbReference>
<dbReference type="InterPro" id="IPR004044">
    <property type="entry name" value="KH_dom_type_2"/>
</dbReference>
<dbReference type="InterPro" id="IPR009019">
    <property type="entry name" value="KH_sf_prok-type"/>
</dbReference>
<dbReference type="InterPro" id="IPR036419">
    <property type="entry name" value="Ribosomal_S3_C_sf"/>
</dbReference>
<dbReference type="InterPro" id="IPR027488">
    <property type="entry name" value="Ribosomal_uS3_arc"/>
</dbReference>
<dbReference type="InterPro" id="IPR001351">
    <property type="entry name" value="Ribosomal_uS3_C"/>
</dbReference>
<dbReference type="InterPro" id="IPR005703">
    <property type="entry name" value="Ribosomal_uS3_euk/arc"/>
</dbReference>
<dbReference type="NCBIfam" id="NF003219">
    <property type="entry name" value="PRK04191.1"/>
    <property type="match status" value="1"/>
</dbReference>
<dbReference type="NCBIfam" id="TIGR01008">
    <property type="entry name" value="uS3_euk_arch"/>
    <property type="match status" value="1"/>
</dbReference>
<dbReference type="PANTHER" id="PTHR11760">
    <property type="entry name" value="30S/40S RIBOSOMAL PROTEIN S3"/>
    <property type="match status" value="1"/>
</dbReference>
<dbReference type="PANTHER" id="PTHR11760:SF32">
    <property type="entry name" value="SMALL RIBOSOMAL SUBUNIT PROTEIN US3"/>
    <property type="match status" value="1"/>
</dbReference>
<dbReference type="Pfam" id="PF07650">
    <property type="entry name" value="KH_2"/>
    <property type="match status" value="1"/>
</dbReference>
<dbReference type="Pfam" id="PF00189">
    <property type="entry name" value="Ribosomal_S3_C"/>
    <property type="match status" value="1"/>
</dbReference>
<dbReference type="SMART" id="SM00322">
    <property type="entry name" value="KH"/>
    <property type="match status" value="1"/>
</dbReference>
<dbReference type="SUPFAM" id="SSF54814">
    <property type="entry name" value="Prokaryotic type KH domain (KH-domain type II)"/>
    <property type="match status" value="1"/>
</dbReference>
<dbReference type="SUPFAM" id="SSF54821">
    <property type="entry name" value="Ribosomal protein S3 C-terminal domain"/>
    <property type="match status" value="1"/>
</dbReference>
<dbReference type="PROSITE" id="PS50823">
    <property type="entry name" value="KH_TYPE_2"/>
    <property type="match status" value="1"/>
</dbReference>
<keyword id="KW-0002">3D-structure</keyword>
<keyword id="KW-1185">Reference proteome</keyword>
<keyword id="KW-0687">Ribonucleoprotein</keyword>
<keyword id="KW-0689">Ribosomal protein</keyword>
<keyword id="KW-0694">RNA-binding</keyword>
<keyword id="KW-0699">rRNA-binding</keyword>
<protein>
    <recommendedName>
        <fullName evidence="1">Small ribosomal subunit protein uS3</fullName>
    </recommendedName>
    <alternativeName>
        <fullName>30S ribosomal protein S3</fullName>
    </alternativeName>
</protein>
<organism>
    <name type="scientific">Pyrococcus furiosus (strain ATCC 43587 / DSM 3638 / JCM 8422 / Vc1)</name>
    <dbReference type="NCBI Taxonomy" id="186497"/>
    <lineage>
        <taxon>Archaea</taxon>
        <taxon>Methanobacteriati</taxon>
        <taxon>Methanobacteriota</taxon>
        <taxon>Thermococci</taxon>
        <taxon>Thermococcales</taxon>
        <taxon>Thermococcaceae</taxon>
        <taxon>Pyrococcus</taxon>
    </lineage>
</organism>
<sequence>MAIERYFIREAVREMLIDEFLEKELRRAGYGGLDIKKTPLGTKVIIFAANPGYVIGRGGRRIRELTRILEKQFGLENPQIEVEEIKNPYLNAKVQAVRLAQALERGIHFRRAAYAALRAIMNNGARGVEIRLSGKLTGERAKSIRFYQGYLAKVGNPAETLVSKGYAQALLKLGVIGVKVAIMPPGARLPDEIEIIEKPVEEEVVSNEAE</sequence>
<comment type="function">
    <text evidence="1">Binds the lower part of the 30S subunit head.</text>
</comment>
<comment type="subunit">
    <text evidence="1 2">Part of the 30S ribosomal subunit.</text>
</comment>
<comment type="similarity">
    <text evidence="1">Belongs to the universal ribosomal protein uS3 family.</text>
</comment>
<reference key="1">
    <citation type="journal article" date="1999" name="Genetics">
        <title>Divergence of the hyperthermophilic archaea Pyrococcus furiosus and P. horikoshii inferred from complete genomic sequences.</title>
        <authorList>
            <person name="Maeder D.L."/>
            <person name="Weiss R.B."/>
            <person name="Dunn D.M."/>
            <person name="Cherry J.L."/>
            <person name="Gonzalez J.M."/>
            <person name="DiRuggiero J."/>
            <person name="Robb F.T."/>
        </authorList>
    </citation>
    <scope>NUCLEOTIDE SEQUENCE [LARGE SCALE GENOMIC DNA]</scope>
    <source>
        <strain>ATCC 43587 / DSM 3638 / JCM 8422 / Vc1</strain>
    </source>
</reference>
<reference evidence="3" key="2">
    <citation type="journal article" date="2013" name="Nucleic Acids Res.">
        <title>Promiscuous behaviour of archaeal ribosomal proteins: implications for eukaryotic ribosome evolution.</title>
        <authorList>
            <person name="Armache J.P."/>
            <person name="Anger A.M."/>
            <person name="Marquez V."/>
            <person name="Franckenberg S."/>
            <person name="Frohlich T."/>
            <person name="Villa E."/>
            <person name="Berninghausen O."/>
            <person name="Thomm M."/>
            <person name="Arnold G.J."/>
            <person name="Beckmann R."/>
            <person name="Wilson D.N."/>
        </authorList>
    </citation>
    <scope>STRUCTURE BY ELECTRON MICROSCOPY (6.60 ANGSTROMS) IN THE 70S RIBOSOME</scope>
    <scope>SUBUNIT</scope>
</reference>
<gene>
    <name evidence="1" type="primary">rps3</name>
    <name type="ordered locus">PF1819</name>
</gene>
<evidence type="ECO:0000255" key="1">
    <source>
        <dbReference type="HAMAP-Rule" id="MF_01309"/>
    </source>
</evidence>
<evidence type="ECO:0000269" key="2">
    <source>
    </source>
</evidence>
<evidence type="ECO:0007744" key="3">
    <source>
        <dbReference type="PDB" id="4V6U"/>
    </source>
</evidence>
<accession>Q8U004</accession>
<name>RS3_PYRFU</name>